<evidence type="ECO:0000255" key="1">
    <source>
        <dbReference type="HAMAP-Rule" id="MF_01080"/>
    </source>
</evidence>
<organism>
    <name type="scientific">Shewanella denitrificans (strain OS217 / ATCC BAA-1090 / DSM 15013)</name>
    <dbReference type="NCBI Taxonomy" id="318161"/>
    <lineage>
        <taxon>Bacteria</taxon>
        <taxon>Pseudomonadati</taxon>
        <taxon>Pseudomonadota</taxon>
        <taxon>Gammaproteobacteria</taxon>
        <taxon>Alteromonadales</taxon>
        <taxon>Shewanellaceae</taxon>
        <taxon>Shewanella</taxon>
    </lineage>
</organism>
<name>TRUB_SHEDO</name>
<comment type="function">
    <text evidence="1">Responsible for synthesis of pseudouridine from uracil-55 in the psi GC loop of transfer RNAs.</text>
</comment>
<comment type="catalytic activity">
    <reaction evidence="1">
        <text>uridine(55) in tRNA = pseudouridine(55) in tRNA</text>
        <dbReference type="Rhea" id="RHEA:42532"/>
        <dbReference type="Rhea" id="RHEA-COMP:10101"/>
        <dbReference type="Rhea" id="RHEA-COMP:10102"/>
        <dbReference type="ChEBI" id="CHEBI:65314"/>
        <dbReference type="ChEBI" id="CHEBI:65315"/>
        <dbReference type="EC" id="5.4.99.25"/>
    </reaction>
</comment>
<comment type="similarity">
    <text evidence="1">Belongs to the pseudouridine synthase TruB family. Type 1 subfamily.</text>
</comment>
<dbReference type="EC" id="5.4.99.25" evidence="1"/>
<dbReference type="EMBL" id="CP000302">
    <property type="protein sequence ID" value="ABE54297.1"/>
    <property type="molecule type" value="Genomic_DNA"/>
</dbReference>
<dbReference type="RefSeq" id="WP_011495461.1">
    <property type="nucleotide sequence ID" value="NC_007954.1"/>
</dbReference>
<dbReference type="SMR" id="Q12QH9"/>
<dbReference type="STRING" id="318161.Sden_1009"/>
<dbReference type="KEGG" id="sdn:Sden_1009"/>
<dbReference type="eggNOG" id="COG0130">
    <property type="taxonomic scope" value="Bacteria"/>
</dbReference>
<dbReference type="HOGENOM" id="CLU_032087_0_3_6"/>
<dbReference type="OrthoDB" id="9802309at2"/>
<dbReference type="Proteomes" id="UP000001982">
    <property type="component" value="Chromosome"/>
</dbReference>
<dbReference type="GO" id="GO:0003723">
    <property type="term" value="F:RNA binding"/>
    <property type="evidence" value="ECO:0007669"/>
    <property type="project" value="InterPro"/>
</dbReference>
<dbReference type="GO" id="GO:0160148">
    <property type="term" value="F:tRNA pseudouridine(55) synthase activity"/>
    <property type="evidence" value="ECO:0007669"/>
    <property type="project" value="UniProtKB-EC"/>
</dbReference>
<dbReference type="GO" id="GO:1990481">
    <property type="term" value="P:mRNA pseudouridine synthesis"/>
    <property type="evidence" value="ECO:0007669"/>
    <property type="project" value="TreeGrafter"/>
</dbReference>
<dbReference type="GO" id="GO:0031119">
    <property type="term" value="P:tRNA pseudouridine synthesis"/>
    <property type="evidence" value="ECO:0007669"/>
    <property type="project" value="UniProtKB-UniRule"/>
</dbReference>
<dbReference type="CDD" id="cd02573">
    <property type="entry name" value="PseudoU_synth_EcTruB"/>
    <property type="match status" value="1"/>
</dbReference>
<dbReference type="CDD" id="cd21152">
    <property type="entry name" value="PUA_TruB_bacterial"/>
    <property type="match status" value="1"/>
</dbReference>
<dbReference type="FunFam" id="2.30.130.10:FF:000004">
    <property type="entry name" value="tRNA pseudouridine synthase B"/>
    <property type="match status" value="1"/>
</dbReference>
<dbReference type="FunFam" id="3.30.2350.10:FF:000003">
    <property type="entry name" value="tRNA pseudouridine synthase B"/>
    <property type="match status" value="1"/>
</dbReference>
<dbReference type="Gene3D" id="3.30.2350.10">
    <property type="entry name" value="Pseudouridine synthase"/>
    <property type="match status" value="1"/>
</dbReference>
<dbReference type="Gene3D" id="2.30.130.10">
    <property type="entry name" value="PUA domain"/>
    <property type="match status" value="1"/>
</dbReference>
<dbReference type="HAMAP" id="MF_01080">
    <property type="entry name" value="TruB_bact"/>
    <property type="match status" value="1"/>
</dbReference>
<dbReference type="InterPro" id="IPR020103">
    <property type="entry name" value="PsdUridine_synth_cat_dom_sf"/>
</dbReference>
<dbReference type="InterPro" id="IPR002501">
    <property type="entry name" value="PsdUridine_synth_N"/>
</dbReference>
<dbReference type="InterPro" id="IPR015947">
    <property type="entry name" value="PUA-like_sf"/>
</dbReference>
<dbReference type="InterPro" id="IPR036974">
    <property type="entry name" value="PUA_sf"/>
</dbReference>
<dbReference type="InterPro" id="IPR014780">
    <property type="entry name" value="tRNA_psdUridine_synth_TruB"/>
</dbReference>
<dbReference type="InterPro" id="IPR015240">
    <property type="entry name" value="tRNA_sdUridine_synth_fam1_C"/>
</dbReference>
<dbReference type="InterPro" id="IPR032819">
    <property type="entry name" value="TruB_C"/>
</dbReference>
<dbReference type="NCBIfam" id="TIGR00431">
    <property type="entry name" value="TruB"/>
    <property type="match status" value="1"/>
</dbReference>
<dbReference type="PANTHER" id="PTHR13767:SF2">
    <property type="entry name" value="PSEUDOURIDYLATE SYNTHASE TRUB1"/>
    <property type="match status" value="1"/>
</dbReference>
<dbReference type="PANTHER" id="PTHR13767">
    <property type="entry name" value="TRNA-PSEUDOURIDINE SYNTHASE"/>
    <property type="match status" value="1"/>
</dbReference>
<dbReference type="Pfam" id="PF09157">
    <property type="entry name" value="TruB-C_2"/>
    <property type="match status" value="1"/>
</dbReference>
<dbReference type="Pfam" id="PF16198">
    <property type="entry name" value="TruB_C_2"/>
    <property type="match status" value="1"/>
</dbReference>
<dbReference type="Pfam" id="PF01509">
    <property type="entry name" value="TruB_N"/>
    <property type="match status" value="1"/>
</dbReference>
<dbReference type="SUPFAM" id="SSF55120">
    <property type="entry name" value="Pseudouridine synthase"/>
    <property type="match status" value="1"/>
</dbReference>
<dbReference type="SUPFAM" id="SSF88697">
    <property type="entry name" value="PUA domain-like"/>
    <property type="match status" value="1"/>
</dbReference>
<proteinExistence type="inferred from homology"/>
<feature type="chain" id="PRO_1000084673" description="tRNA pseudouridine synthase B">
    <location>
        <begin position="1"/>
        <end position="317"/>
    </location>
</feature>
<feature type="active site" description="Nucleophile" evidence="1">
    <location>
        <position position="47"/>
    </location>
</feature>
<reference key="1">
    <citation type="submission" date="2006-03" db="EMBL/GenBank/DDBJ databases">
        <title>Complete sequence of Shewanella denitrificans OS217.</title>
        <authorList>
            <consortium name="US DOE Joint Genome Institute"/>
            <person name="Copeland A."/>
            <person name="Lucas S."/>
            <person name="Lapidus A."/>
            <person name="Barry K."/>
            <person name="Detter J.C."/>
            <person name="Glavina del Rio T."/>
            <person name="Hammon N."/>
            <person name="Israni S."/>
            <person name="Dalin E."/>
            <person name="Tice H."/>
            <person name="Pitluck S."/>
            <person name="Brettin T."/>
            <person name="Bruce D."/>
            <person name="Han C."/>
            <person name="Tapia R."/>
            <person name="Gilna P."/>
            <person name="Kiss H."/>
            <person name="Schmutz J."/>
            <person name="Larimer F."/>
            <person name="Land M."/>
            <person name="Hauser L."/>
            <person name="Kyrpides N."/>
            <person name="Lykidis A."/>
            <person name="Richardson P."/>
        </authorList>
    </citation>
    <scope>NUCLEOTIDE SEQUENCE [LARGE SCALE GENOMIC DNA]</scope>
    <source>
        <strain>OS217 / ATCC BAA-1090 / DSM 15013</strain>
    </source>
</reference>
<protein>
    <recommendedName>
        <fullName evidence="1">tRNA pseudouridine synthase B</fullName>
        <ecNumber evidence="1">5.4.99.25</ecNumber>
    </recommendedName>
    <alternativeName>
        <fullName evidence="1">tRNA pseudouridine(55) synthase</fullName>
        <shortName evidence="1">Psi55 synthase</shortName>
    </alternativeName>
    <alternativeName>
        <fullName evidence="1">tRNA pseudouridylate synthase</fullName>
    </alternativeName>
    <alternativeName>
        <fullName evidence="1">tRNA-uridine isomerase</fullName>
    </alternativeName>
</protein>
<sequence>MARRSKGRQIDGIVLLDKDTGMSSNYALQRVKRFFNANKAGHTGALDPLATGMLPICLGEATKFSQHLLDADKRYLVTAKLGVRTDTSDSDGEVVQTRDINFTQAQLETALEHFRGDTMQVPSMFSALKHQGQPLYKYAREGIEVPREARPITVFELNFIKLEGDELTLDIHCSKGTYIRTITDDLGEMLGCGAHVIMLRRTQVADYPYDKMVSLADLEALVTQAQQQELAVGELLDPLLLPMDTAVANFPEINLPESMLYYVMQGQAVQASGLKIDVLVRITIGEQRKFVGIGIMNDDGLLAPKRLIVIPAEESPE</sequence>
<accession>Q12QH9</accession>
<gene>
    <name evidence="1" type="primary">truB</name>
    <name type="ordered locus">Sden_1009</name>
</gene>
<keyword id="KW-0413">Isomerase</keyword>
<keyword id="KW-1185">Reference proteome</keyword>
<keyword id="KW-0819">tRNA processing</keyword>